<feature type="chain" id="PRO_0000292306" description="Pyridoxine/pyridoxamine 5'-phosphate oxidase">
    <location>
        <begin position="1"/>
        <end position="209"/>
    </location>
</feature>
<feature type="binding site" evidence="1">
    <location>
        <begin position="2"/>
        <end position="5"/>
    </location>
    <ligand>
        <name>substrate</name>
    </ligand>
</feature>
<feature type="binding site" evidence="1">
    <location>
        <begin position="61"/>
        <end position="66"/>
    </location>
    <ligand>
        <name>FMN</name>
        <dbReference type="ChEBI" id="CHEBI:58210"/>
    </ligand>
</feature>
<feature type="binding site" evidence="1">
    <location>
        <position position="66"/>
    </location>
    <ligand>
        <name>substrate</name>
    </ligand>
</feature>
<feature type="binding site" evidence="1">
    <location>
        <begin position="76"/>
        <end position="77"/>
    </location>
    <ligand>
        <name>FMN</name>
        <dbReference type="ChEBI" id="CHEBI:58210"/>
    </ligand>
</feature>
<feature type="binding site" evidence="1">
    <location>
        <position position="83"/>
    </location>
    <ligand>
        <name>FMN</name>
        <dbReference type="ChEBI" id="CHEBI:58210"/>
    </ligand>
</feature>
<feature type="binding site" evidence="1">
    <location>
        <position position="105"/>
    </location>
    <ligand>
        <name>FMN</name>
        <dbReference type="ChEBI" id="CHEBI:58210"/>
    </ligand>
</feature>
<feature type="binding site" evidence="1">
    <location>
        <position position="123"/>
    </location>
    <ligand>
        <name>substrate</name>
    </ligand>
</feature>
<feature type="binding site" evidence="1">
    <location>
        <position position="127"/>
    </location>
    <ligand>
        <name>substrate</name>
    </ligand>
</feature>
<feature type="binding site" evidence="1">
    <location>
        <position position="131"/>
    </location>
    <ligand>
        <name>substrate</name>
    </ligand>
</feature>
<feature type="binding site" evidence="1">
    <location>
        <begin position="140"/>
        <end position="141"/>
    </location>
    <ligand>
        <name>FMN</name>
        <dbReference type="ChEBI" id="CHEBI:58210"/>
    </ligand>
</feature>
<feature type="binding site" evidence="1">
    <location>
        <position position="186"/>
    </location>
    <ligand>
        <name>FMN</name>
        <dbReference type="ChEBI" id="CHEBI:58210"/>
    </ligand>
</feature>
<feature type="binding site" evidence="1">
    <location>
        <begin position="192"/>
        <end position="194"/>
    </location>
    <ligand>
        <name>substrate</name>
    </ligand>
</feature>
<feature type="binding site" evidence="1">
    <location>
        <position position="196"/>
    </location>
    <ligand>
        <name>FMN</name>
        <dbReference type="ChEBI" id="CHEBI:58210"/>
    </ligand>
</feature>
<name>PDXH_MYCSJ</name>
<organism>
    <name type="scientific">Mycobacterium sp. (strain JLS)</name>
    <dbReference type="NCBI Taxonomy" id="164757"/>
    <lineage>
        <taxon>Bacteria</taxon>
        <taxon>Bacillati</taxon>
        <taxon>Actinomycetota</taxon>
        <taxon>Actinomycetes</taxon>
        <taxon>Mycobacteriales</taxon>
        <taxon>Mycobacteriaceae</taxon>
        <taxon>Mycobacterium</taxon>
    </lineage>
</organism>
<reference key="1">
    <citation type="submission" date="2007-02" db="EMBL/GenBank/DDBJ databases">
        <title>Complete sequence of Mycobacterium sp. JLS.</title>
        <authorList>
            <consortium name="US DOE Joint Genome Institute"/>
            <person name="Copeland A."/>
            <person name="Lucas S."/>
            <person name="Lapidus A."/>
            <person name="Barry K."/>
            <person name="Detter J.C."/>
            <person name="Glavina del Rio T."/>
            <person name="Hammon N."/>
            <person name="Israni S."/>
            <person name="Dalin E."/>
            <person name="Tice H."/>
            <person name="Pitluck S."/>
            <person name="Chain P."/>
            <person name="Malfatti S."/>
            <person name="Shin M."/>
            <person name="Vergez L."/>
            <person name="Schmutz J."/>
            <person name="Larimer F."/>
            <person name="Land M."/>
            <person name="Hauser L."/>
            <person name="Kyrpides N."/>
            <person name="Mikhailova N."/>
            <person name="Miller C.D."/>
            <person name="Anderson A.J."/>
            <person name="Sims R.C."/>
            <person name="Richardson P."/>
        </authorList>
    </citation>
    <scope>NUCLEOTIDE SEQUENCE [LARGE SCALE GENOMIC DNA]</scope>
    <source>
        <strain>JLS</strain>
    </source>
</reference>
<proteinExistence type="inferred from homology"/>
<gene>
    <name evidence="1" type="primary">pdxH</name>
    <name type="ordered locus">Mjls_4840</name>
</gene>
<accession>A3Q628</accession>
<sequence length="209" mass="23107">MRVEYGSVEKDGSADLDVDWLADGWVALLRRWLADAEAAGIAEPNAIVLGTVDAAGRPVTRTVLCKSVDDTGITFFTNYGSAKGEDLASTPYASATFPWFALGRQVHVRGPVTKVSAEETADYWSKRPRGSQLGAWASQQSRPIASRAELLDQLAEVTERFADHDTVPVPPDWGGYRITAEVVEFWQGRESRVHNRIRVHDGRIERLQP</sequence>
<protein>
    <recommendedName>
        <fullName evidence="1">Pyridoxine/pyridoxamine 5'-phosphate oxidase</fullName>
        <ecNumber evidence="1">1.4.3.5</ecNumber>
    </recommendedName>
    <alternativeName>
        <fullName evidence="1">PNP/PMP oxidase</fullName>
        <shortName evidence="1">PNPOx</shortName>
    </alternativeName>
    <alternativeName>
        <fullName evidence="1">Pyridoxal 5'-phosphate synthase</fullName>
    </alternativeName>
</protein>
<dbReference type="EC" id="1.4.3.5" evidence="1"/>
<dbReference type="EMBL" id="CP000580">
    <property type="protein sequence ID" value="ABO00606.1"/>
    <property type="molecule type" value="Genomic_DNA"/>
</dbReference>
<dbReference type="SMR" id="A3Q628"/>
<dbReference type="KEGG" id="mjl:Mjls_4840"/>
<dbReference type="HOGENOM" id="CLU_032263_2_2_11"/>
<dbReference type="UniPathway" id="UPA01068">
    <property type="reaction ID" value="UER00304"/>
</dbReference>
<dbReference type="UniPathway" id="UPA01068">
    <property type="reaction ID" value="UER00305"/>
</dbReference>
<dbReference type="GO" id="GO:0010181">
    <property type="term" value="F:FMN binding"/>
    <property type="evidence" value="ECO:0007669"/>
    <property type="project" value="UniProtKB-UniRule"/>
</dbReference>
<dbReference type="GO" id="GO:0004733">
    <property type="term" value="F:pyridoxamine phosphate oxidase activity"/>
    <property type="evidence" value="ECO:0007669"/>
    <property type="project" value="UniProtKB-UniRule"/>
</dbReference>
<dbReference type="GO" id="GO:0008615">
    <property type="term" value="P:pyridoxine biosynthetic process"/>
    <property type="evidence" value="ECO:0007669"/>
    <property type="project" value="UniProtKB-KW"/>
</dbReference>
<dbReference type="Gene3D" id="2.30.110.10">
    <property type="entry name" value="Electron Transport, Fmn-binding Protein, Chain A"/>
    <property type="match status" value="1"/>
</dbReference>
<dbReference type="HAMAP" id="MF_01629">
    <property type="entry name" value="PdxH"/>
    <property type="match status" value="1"/>
</dbReference>
<dbReference type="InterPro" id="IPR000659">
    <property type="entry name" value="Pyridox_Oxase"/>
</dbReference>
<dbReference type="InterPro" id="IPR019740">
    <property type="entry name" value="Pyridox_Oxase_CS"/>
</dbReference>
<dbReference type="InterPro" id="IPR011576">
    <property type="entry name" value="Pyridox_Oxase_N"/>
</dbReference>
<dbReference type="InterPro" id="IPR019576">
    <property type="entry name" value="Pyridoxamine_oxidase_dimer_C"/>
</dbReference>
<dbReference type="InterPro" id="IPR012349">
    <property type="entry name" value="Split_barrel_FMN-bd"/>
</dbReference>
<dbReference type="NCBIfam" id="TIGR00558">
    <property type="entry name" value="pdxH"/>
    <property type="match status" value="1"/>
</dbReference>
<dbReference type="NCBIfam" id="NF004231">
    <property type="entry name" value="PRK05679.1"/>
    <property type="match status" value="1"/>
</dbReference>
<dbReference type="PANTHER" id="PTHR10851:SF0">
    <property type="entry name" value="PYRIDOXINE-5'-PHOSPHATE OXIDASE"/>
    <property type="match status" value="1"/>
</dbReference>
<dbReference type="PANTHER" id="PTHR10851">
    <property type="entry name" value="PYRIDOXINE-5-PHOSPHATE OXIDASE"/>
    <property type="match status" value="1"/>
</dbReference>
<dbReference type="Pfam" id="PF10590">
    <property type="entry name" value="PNP_phzG_C"/>
    <property type="match status" value="1"/>
</dbReference>
<dbReference type="Pfam" id="PF01243">
    <property type="entry name" value="PNPOx_N"/>
    <property type="match status" value="1"/>
</dbReference>
<dbReference type="PIRSF" id="PIRSF000190">
    <property type="entry name" value="Pyd_amn-ph_oxd"/>
    <property type="match status" value="1"/>
</dbReference>
<dbReference type="SUPFAM" id="SSF50475">
    <property type="entry name" value="FMN-binding split barrel"/>
    <property type="match status" value="1"/>
</dbReference>
<dbReference type="PROSITE" id="PS01064">
    <property type="entry name" value="PYRIDOX_OXIDASE"/>
    <property type="match status" value="1"/>
</dbReference>
<keyword id="KW-0285">Flavoprotein</keyword>
<keyword id="KW-0288">FMN</keyword>
<keyword id="KW-0560">Oxidoreductase</keyword>
<keyword id="KW-0664">Pyridoxine biosynthesis</keyword>
<evidence type="ECO:0000255" key="1">
    <source>
        <dbReference type="HAMAP-Rule" id="MF_01629"/>
    </source>
</evidence>
<comment type="function">
    <text evidence="1">Catalyzes the oxidation of either pyridoxine 5'-phosphate (PNP) or pyridoxamine 5'-phosphate (PMP) into pyridoxal 5'-phosphate (PLP).</text>
</comment>
<comment type="catalytic activity">
    <reaction evidence="1">
        <text>pyridoxamine 5'-phosphate + O2 + H2O = pyridoxal 5'-phosphate + H2O2 + NH4(+)</text>
        <dbReference type="Rhea" id="RHEA:15817"/>
        <dbReference type="ChEBI" id="CHEBI:15377"/>
        <dbReference type="ChEBI" id="CHEBI:15379"/>
        <dbReference type="ChEBI" id="CHEBI:16240"/>
        <dbReference type="ChEBI" id="CHEBI:28938"/>
        <dbReference type="ChEBI" id="CHEBI:58451"/>
        <dbReference type="ChEBI" id="CHEBI:597326"/>
        <dbReference type="EC" id="1.4.3.5"/>
    </reaction>
</comment>
<comment type="catalytic activity">
    <reaction evidence="1">
        <text>pyridoxine 5'-phosphate + O2 = pyridoxal 5'-phosphate + H2O2</text>
        <dbReference type="Rhea" id="RHEA:15149"/>
        <dbReference type="ChEBI" id="CHEBI:15379"/>
        <dbReference type="ChEBI" id="CHEBI:16240"/>
        <dbReference type="ChEBI" id="CHEBI:58589"/>
        <dbReference type="ChEBI" id="CHEBI:597326"/>
        <dbReference type="EC" id="1.4.3.5"/>
    </reaction>
</comment>
<comment type="cofactor">
    <cofactor evidence="1">
        <name>FMN</name>
        <dbReference type="ChEBI" id="CHEBI:58210"/>
    </cofactor>
    <text evidence="1">Binds 1 FMN per subunit.</text>
</comment>
<comment type="pathway">
    <text evidence="1">Cofactor metabolism; pyridoxal 5'-phosphate salvage; pyridoxal 5'-phosphate from pyridoxamine 5'-phosphate: step 1/1.</text>
</comment>
<comment type="pathway">
    <text evidence="1">Cofactor metabolism; pyridoxal 5'-phosphate salvage; pyridoxal 5'-phosphate from pyridoxine 5'-phosphate: step 1/1.</text>
</comment>
<comment type="subunit">
    <text evidence="1">Homodimer.</text>
</comment>
<comment type="similarity">
    <text evidence="1">Belongs to the pyridoxamine 5'-phosphate oxidase family.</text>
</comment>